<sequence>MRPPSPPHVRWLCVLAGALACALRPAGSQAASPQHECEYLQLIEIQRQQCLEEAQLENETTGCSKMWDNLTCWPTTPRGQAVVLDCPLIFQLFAPIHGYNISRSCTEEGWSQLEPGPYHIACGLNDRASSLDEQQQTKFYNTVKTGYTIGYSLSLASLLVAMAILSLFRKLHCTRNYIHMHLFMSFILRATAVFIKDMALFNSGEIDHCSEASVGCKAAVVFFQYCVMANFFWLLVEGLYLYTLLAVSFFSERKYFWGYILIGWGVPSVFITIWTVVRIYFEDFGCWDTIINSSLWWIIKAPILLSILVNFVLFICIIRILVQKLRPPDIGKNDSSPYSRLAKSTLLLIPLFGIHYVMFAFFPDNFKAQVKMVFELVVGSFQGFVVAILYCFLNGEVQAELRRKWRRWHLQGVLGWSSKSQHPWGGSNGATCSTQVSMLTRVSPSARRSSSFQAEVSLV</sequence>
<protein>
    <recommendedName>
        <fullName evidence="2">Vasoactive intestinal polypeptide receptor 1</fullName>
        <shortName>VIP-R-1</shortName>
    </recommendedName>
    <alternativeName>
        <fullName>Pituitary adenylate cyclase-activating polypeptide type II receptor</fullName>
        <shortName>PACAP type II receptor</shortName>
        <shortName>PACAP-R-2</shortName>
        <shortName>PACAP-R2</shortName>
    </alternativeName>
</protein>
<reference key="1">
    <citation type="journal article" date="1992" name="Neuron">
        <title>Functional expression and tissue distribution of a novel receptor for vasoactive intestinal polypeptide.</title>
        <authorList>
            <person name="Ishihara T."/>
            <person name="Shigemoto R."/>
            <person name="Mori K."/>
            <person name="Takahashi K."/>
            <person name="Nagata S."/>
        </authorList>
    </citation>
    <scope>NUCLEOTIDE SEQUENCE [MRNA]</scope>
    <source>
        <tissue>Lung</tissue>
    </source>
</reference>
<reference key="2">
    <citation type="journal article" date="2004" name="Genome Res.">
        <title>The status, quality, and expansion of the NIH full-length cDNA project: the Mammalian Gene Collection (MGC).</title>
        <authorList>
            <consortium name="The MGC Project Team"/>
        </authorList>
    </citation>
    <scope>NUCLEOTIDE SEQUENCE [LARGE SCALE MRNA]</scope>
    <source>
        <tissue>Lung</tissue>
    </source>
</reference>
<reference key="3">
    <citation type="journal article" date="1995" name="Biochem. J.">
        <title>Characterization of the rat vasoactive intestinal polypeptide receptor gene 5' region.</title>
        <authorList>
            <person name="Pei L."/>
            <person name="Melmed S."/>
        </authorList>
    </citation>
    <scope>NUCLEOTIDE SEQUENCE OF 1-26</scope>
    <scope>TISSUE SPECIFICITY</scope>
    <scope>DEVELOPMENTAL STAGE</scope>
</reference>
<feature type="signal peptide" evidence="3">
    <location>
        <begin position="1"/>
        <end position="30"/>
    </location>
</feature>
<feature type="chain" id="PRO_0000012858" description="Vasoactive intestinal polypeptide receptor 1">
    <location>
        <begin position="31"/>
        <end position="459"/>
    </location>
</feature>
<feature type="topological domain" description="Extracellular" evidence="5">
    <location>
        <begin position="31"/>
        <end position="142"/>
    </location>
</feature>
<feature type="transmembrane region" description="Helical; Name=1" evidence="1">
    <location>
        <begin position="143"/>
        <end position="167"/>
    </location>
</feature>
<feature type="topological domain" description="Cytoplasmic" evidence="5">
    <location>
        <begin position="168"/>
        <end position="175"/>
    </location>
</feature>
<feature type="transmembrane region" description="Helical; Name=2" evidence="1">
    <location>
        <begin position="176"/>
        <end position="197"/>
    </location>
</feature>
<feature type="topological domain" description="Extracellular" evidence="5">
    <location>
        <begin position="198"/>
        <end position="217"/>
    </location>
</feature>
<feature type="transmembrane region" description="Helical; Name=3" evidence="1">
    <location>
        <begin position="218"/>
        <end position="242"/>
    </location>
</feature>
<feature type="topological domain" description="Cytoplasmic" evidence="5">
    <location>
        <begin position="243"/>
        <end position="255"/>
    </location>
</feature>
<feature type="transmembrane region" description="Helical; Name=4" evidence="1">
    <location>
        <begin position="256"/>
        <end position="277"/>
    </location>
</feature>
<feature type="topological domain" description="Extracellular" evidence="5">
    <location>
        <begin position="278"/>
        <end position="293"/>
    </location>
</feature>
<feature type="transmembrane region" description="Helical; Name=5" evidence="1">
    <location>
        <begin position="294"/>
        <end position="318"/>
    </location>
</feature>
<feature type="topological domain" description="Cytoplasmic" evidence="5">
    <location>
        <begin position="319"/>
        <end position="340"/>
    </location>
</feature>
<feature type="transmembrane region" description="Helical; Name=6" evidence="1">
    <location>
        <begin position="341"/>
        <end position="361"/>
    </location>
</feature>
<feature type="topological domain" description="Extracellular" evidence="5">
    <location>
        <begin position="362"/>
        <end position="369"/>
    </location>
</feature>
<feature type="transmembrane region" description="Helical; Name=7" evidence="1">
    <location>
        <begin position="370"/>
        <end position="393"/>
    </location>
</feature>
<feature type="topological domain" description="Cytoplasmic" evidence="5">
    <location>
        <begin position="394"/>
        <end position="459"/>
    </location>
</feature>
<feature type="glycosylation site" description="N-linked (GlcNAc...) asparagine" evidence="3">
    <location>
        <position position="58"/>
    </location>
</feature>
<feature type="glycosylation site" description="N-linked (GlcNAc...) asparagine" evidence="3">
    <location>
        <position position="69"/>
    </location>
</feature>
<feature type="glycosylation site" description="N-linked (GlcNAc...) asparagine" evidence="3">
    <location>
        <position position="100"/>
    </location>
</feature>
<feature type="glycosylation site" description="N-linked (GlcNAc...) asparagine" evidence="3">
    <location>
        <position position="292"/>
    </location>
</feature>
<feature type="disulfide bond" evidence="1">
    <location>
        <begin position="37"/>
        <end position="209"/>
    </location>
</feature>
<feature type="disulfide bond" evidence="1">
    <location>
        <begin position="50"/>
        <end position="72"/>
    </location>
</feature>
<feature type="disulfide bond" evidence="1">
    <location>
        <begin position="63"/>
        <end position="105"/>
    </location>
</feature>
<feature type="disulfide bond" evidence="1">
    <location>
        <begin position="86"/>
        <end position="122"/>
    </location>
</feature>
<feature type="disulfide bond" evidence="1">
    <location>
        <begin position="216"/>
        <end position="286"/>
    </location>
</feature>
<proteinExistence type="evidence at transcript level"/>
<gene>
    <name evidence="6" type="primary">Vipr1</name>
</gene>
<evidence type="ECO:0000250" key="1">
    <source>
        <dbReference type="UniProtKB" id="P32241"/>
    </source>
</evidence>
<evidence type="ECO:0000250" key="2">
    <source>
        <dbReference type="UniProtKB" id="P97751"/>
    </source>
</evidence>
<evidence type="ECO:0000255" key="3"/>
<evidence type="ECO:0000269" key="4">
    <source>
    </source>
</evidence>
<evidence type="ECO:0000305" key="5"/>
<evidence type="ECO:0000312" key="6">
    <source>
        <dbReference type="RGD" id="3961"/>
    </source>
</evidence>
<name>VIPR1_RAT</name>
<comment type="function">
    <text evidence="1">G protein-coupled receptor activated by the neuropeptides vasoactive intestinal peptide (VIP) and pituitary adenylate cyclase-activating polypeptide (ADCYAP1/PACAP). Binds VIP and both PACAP27 and PACAP38 bioactive peptides with the following order of ligand affinity VIP = PACAP27 &gt; PACAP38. Ligand binding causes a conformation change that triggers signaling via guanine nucleotide-binding proteins (G proteins) and modulates the activity of downstream effectors. Activates cAMP-dependent pathway.</text>
</comment>
<comment type="subunit">
    <text evidence="1">Interacts with ADCYAP1/PACAP; activated by both PACAP27 and PACAP38 neuropeptides. Interacts with VIP; the interaction results in VIPR1 activation.</text>
</comment>
<comment type="subcellular location">
    <subcellularLocation>
        <location evidence="1">Cell membrane</location>
        <topology evidence="1">Multi-pass membrane protein</topology>
    </subcellularLocation>
</comment>
<comment type="tissue specificity">
    <text evidence="4">In liver, lung, intestines, thymus and brain (mostly in the cerebral cortex and hippocampus).</text>
</comment>
<comment type="developmental stage">
    <text evidence="4">Not expressed in the fetal lung, but is expressed at high levels 2 weeks after birth.</text>
</comment>
<comment type="similarity">
    <text evidence="5">Belongs to the G-protein coupled receptor 2 family.</text>
</comment>
<dbReference type="EMBL" id="M86835">
    <property type="protein sequence ID" value="AAA42331.1"/>
    <property type="molecule type" value="mRNA"/>
</dbReference>
<dbReference type="EMBL" id="BC087136">
    <property type="protein sequence ID" value="AAH87136.1"/>
    <property type="molecule type" value="mRNA"/>
</dbReference>
<dbReference type="EMBL" id="U10635">
    <property type="protein sequence ID" value="AAB48185.1"/>
    <property type="molecule type" value="Genomic_DNA"/>
</dbReference>
<dbReference type="PIR" id="JH0594">
    <property type="entry name" value="JH0594"/>
</dbReference>
<dbReference type="RefSeq" id="NP_036817.1">
    <property type="nucleotide sequence ID" value="NM_012685.2"/>
</dbReference>
<dbReference type="RefSeq" id="XP_038936772.1">
    <property type="nucleotide sequence ID" value="XM_039080844.2"/>
</dbReference>
<dbReference type="SMR" id="P30083"/>
<dbReference type="BioGRID" id="246988">
    <property type="interactions" value="1"/>
</dbReference>
<dbReference type="FunCoup" id="P30083">
    <property type="interactions" value="288"/>
</dbReference>
<dbReference type="STRING" id="10116.ENSRNOP00000065438"/>
<dbReference type="BindingDB" id="P30083"/>
<dbReference type="ChEMBL" id="CHEMBL1955712"/>
<dbReference type="GuidetoPHARMACOLOGY" id="371"/>
<dbReference type="GlyCosmos" id="P30083">
    <property type="glycosylation" value="4 sites, No reported glycans"/>
</dbReference>
<dbReference type="GlyGen" id="P30083">
    <property type="glycosylation" value="4 sites"/>
</dbReference>
<dbReference type="iPTMnet" id="P30083"/>
<dbReference type="PhosphoSitePlus" id="P30083"/>
<dbReference type="Ensembl" id="ENSRNOT00000071573.3">
    <property type="protein sequence ID" value="ENSRNOP00000065438.3"/>
    <property type="gene ID" value="ENSRNOG00000047457.3"/>
</dbReference>
<dbReference type="GeneID" id="24875"/>
<dbReference type="KEGG" id="rno:24875"/>
<dbReference type="AGR" id="RGD:3961"/>
<dbReference type="CTD" id="7433"/>
<dbReference type="RGD" id="3961">
    <property type="gene designation" value="Vipr1"/>
</dbReference>
<dbReference type="GeneTree" id="ENSGT00940000156402"/>
<dbReference type="InParanoid" id="P30083"/>
<dbReference type="OMA" id="SKSQHPW"/>
<dbReference type="OrthoDB" id="5967113at2759"/>
<dbReference type="PhylomeDB" id="P30083"/>
<dbReference type="Reactome" id="R-RNO-420092">
    <property type="pathway name" value="Glucagon-type ligand receptors"/>
</dbReference>
<dbReference type="PRO" id="PR:P30083"/>
<dbReference type="Proteomes" id="UP000002494">
    <property type="component" value="Chromosome 8"/>
</dbReference>
<dbReference type="GO" id="GO:0005886">
    <property type="term" value="C:plasma membrane"/>
    <property type="evidence" value="ECO:0000266"/>
    <property type="project" value="RGD"/>
</dbReference>
<dbReference type="GO" id="GO:0043235">
    <property type="term" value="C:receptor complex"/>
    <property type="evidence" value="ECO:0000266"/>
    <property type="project" value="RGD"/>
</dbReference>
<dbReference type="GO" id="GO:0008528">
    <property type="term" value="F:G protein-coupled peptide receptor activity"/>
    <property type="evidence" value="ECO:0000318"/>
    <property type="project" value="GO_Central"/>
</dbReference>
<dbReference type="GO" id="GO:0017046">
    <property type="term" value="F:peptide hormone binding"/>
    <property type="evidence" value="ECO:0000266"/>
    <property type="project" value="RGD"/>
</dbReference>
<dbReference type="GO" id="GO:0001634">
    <property type="term" value="F:pituitary adenylate cyclase-activating polypeptide receptor activity"/>
    <property type="evidence" value="ECO:0000266"/>
    <property type="project" value="RGD"/>
</dbReference>
<dbReference type="GO" id="GO:0004999">
    <property type="term" value="F:vasoactive intestinal polypeptide receptor activity"/>
    <property type="evidence" value="ECO:0000314"/>
    <property type="project" value="RGD"/>
</dbReference>
<dbReference type="GO" id="GO:0007189">
    <property type="term" value="P:adenylate cyclase-activating G protein-coupled receptor signaling pathway"/>
    <property type="evidence" value="ECO:0000250"/>
    <property type="project" value="UniProtKB"/>
</dbReference>
<dbReference type="GO" id="GO:0007188">
    <property type="term" value="P:adenylate cyclase-modulating G protein-coupled receptor signaling pathway"/>
    <property type="evidence" value="ECO:0000318"/>
    <property type="project" value="GO_Central"/>
</dbReference>
<dbReference type="GO" id="GO:0007166">
    <property type="term" value="P:cell surface receptor signaling pathway"/>
    <property type="evidence" value="ECO:0007669"/>
    <property type="project" value="InterPro"/>
</dbReference>
<dbReference type="GO" id="GO:0007187">
    <property type="term" value="P:G protein-coupled receptor signaling pathway, coupled to cyclic nucleotide second messenger"/>
    <property type="evidence" value="ECO:0000266"/>
    <property type="project" value="RGD"/>
</dbReference>
<dbReference type="CDD" id="cd15269">
    <property type="entry name" value="7tmB1_VIP-R1"/>
    <property type="match status" value="1"/>
</dbReference>
<dbReference type="FunFam" id="4.10.1240.10:FF:000016">
    <property type="entry name" value="Vasoactive intestinal peptide receptor 1"/>
    <property type="match status" value="1"/>
</dbReference>
<dbReference type="FunFam" id="1.20.1070.10:FF:000032">
    <property type="entry name" value="Vasoactive intestinal polypeptide receptor 1"/>
    <property type="match status" value="1"/>
</dbReference>
<dbReference type="Gene3D" id="4.10.1240.10">
    <property type="entry name" value="GPCR, family 2, extracellular hormone receptor domain"/>
    <property type="match status" value="1"/>
</dbReference>
<dbReference type="Gene3D" id="1.20.1070.10">
    <property type="entry name" value="Rhodopsin 7-helix transmembrane proteins"/>
    <property type="match status" value="1"/>
</dbReference>
<dbReference type="InterPro" id="IPR050332">
    <property type="entry name" value="GPCR_2"/>
</dbReference>
<dbReference type="InterPro" id="IPR017981">
    <property type="entry name" value="GPCR_2-like_7TM"/>
</dbReference>
<dbReference type="InterPro" id="IPR036445">
    <property type="entry name" value="GPCR_2_extracell_dom_sf"/>
</dbReference>
<dbReference type="InterPro" id="IPR001879">
    <property type="entry name" value="GPCR_2_extracellular_dom"/>
</dbReference>
<dbReference type="InterPro" id="IPR000832">
    <property type="entry name" value="GPCR_2_secretin-like"/>
</dbReference>
<dbReference type="InterPro" id="IPR017983">
    <property type="entry name" value="GPCR_2_secretin-like_CS"/>
</dbReference>
<dbReference type="InterPro" id="IPR001571">
    <property type="entry name" value="GPCR_2_VIP_rcpt"/>
</dbReference>
<dbReference type="InterPro" id="IPR001771">
    <property type="entry name" value="GPCR_2_VIP_rcpt_1"/>
</dbReference>
<dbReference type="PANTHER" id="PTHR45620">
    <property type="entry name" value="PDF RECEPTOR-LIKE PROTEIN-RELATED"/>
    <property type="match status" value="1"/>
</dbReference>
<dbReference type="PANTHER" id="PTHR45620:SF24">
    <property type="entry name" value="VASOACTIVE INTESTINAL POLYPEPTIDE RECEPTOR 1"/>
    <property type="match status" value="1"/>
</dbReference>
<dbReference type="Pfam" id="PF00002">
    <property type="entry name" value="7tm_2"/>
    <property type="match status" value="1"/>
</dbReference>
<dbReference type="Pfam" id="PF02793">
    <property type="entry name" value="HRM"/>
    <property type="match status" value="1"/>
</dbReference>
<dbReference type="PRINTS" id="PR00249">
    <property type="entry name" value="GPCRSECRETIN"/>
</dbReference>
<dbReference type="PRINTS" id="PR00491">
    <property type="entry name" value="VASOACTVEIPR"/>
</dbReference>
<dbReference type="PRINTS" id="PR01154">
    <property type="entry name" value="VIP1RECEPTOR"/>
</dbReference>
<dbReference type="SMART" id="SM00008">
    <property type="entry name" value="HormR"/>
    <property type="match status" value="1"/>
</dbReference>
<dbReference type="SUPFAM" id="SSF81321">
    <property type="entry name" value="Family A G protein-coupled receptor-like"/>
    <property type="match status" value="1"/>
</dbReference>
<dbReference type="SUPFAM" id="SSF111418">
    <property type="entry name" value="Hormone receptor domain"/>
    <property type="match status" value="1"/>
</dbReference>
<dbReference type="PROSITE" id="PS00649">
    <property type="entry name" value="G_PROTEIN_RECEP_F2_1"/>
    <property type="match status" value="1"/>
</dbReference>
<dbReference type="PROSITE" id="PS00650">
    <property type="entry name" value="G_PROTEIN_RECEP_F2_2"/>
    <property type="match status" value="1"/>
</dbReference>
<dbReference type="PROSITE" id="PS50227">
    <property type="entry name" value="G_PROTEIN_RECEP_F2_3"/>
    <property type="match status" value="1"/>
</dbReference>
<dbReference type="PROSITE" id="PS50261">
    <property type="entry name" value="G_PROTEIN_RECEP_F2_4"/>
    <property type="match status" value="1"/>
</dbReference>
<accession>P30083</accession>
<organism>
    <name type="scientific">Rattus norvegicus</name>
    <name type="common">Rat</name>
    <dbReference type="NCBI Taxonomy" id="10116"/>
    <lineage>
        <taxon>Eukaryota</taxon>
        <taxon>Metazoa</taxon>
        <taxon>Chordata</taxon>
        <taxon>Craniata</taxon>
        <taxon>Vertebrata</taxon>
        <taxon>Euteleostomi</taxon>
        <taxon>Mammalia</taxon>
        <taxon>Eutheria</taxon>
        <taxon>Euarchontoglires</taxon>
        <taxon>Glires</taxon>
        <taxon>Rodentia</taxon>
        <taxon>Myomorpha</taxon>
        <taxon>Muroidea</taxon>
        <taxon>Muridae</taxon>
        <taxon>Murinae</taxon>
        <taxon>Rattus</taxon>
    </lineage>
</organism>
<keyword id="KW-1003">Cell membrane</keyword>
<keyword id="KW-1015">Disulfide bond</keyword>
<keyword id="KW-0297">G-protein coupled receptor</keyword>
<keyword id="KW-0325">Glycoprotein</keyword>
<keyword id="KW-0472">Membrane</keyword>
<keyword id="KW-0675">Receptor</keyword>
<keyword id="KW-1185">Reference proteome</keyword>
<keyword id="KW-0732">Signal</keyword>
<keyword id="KW-0807">Transducer</keyword>
<keyword id="KW-0812">Transmembrane</keyword>
<keyword id="KW-1133">Transmembrane helix</keyword>